<proteinExistence type="inferred from homology"/>
<reference key="1">
    <citation type="journal article" date="2009" name="Science">
        <title>The dynamics and time scale of ongoing genomic erosion in symbiotic bacteria.</title>
        <authorList>
            <person name="Moran N.A."/>
            <person name="McLaughlin H.J."/>
            <person name="Sorek R."/>
        </authorList>
    </citation>
    <scope>NUCLEOTIDE SEQUENCE [LARGE SCALE GENOMIC DNA]</scope>
    <source>
        <strain>5A</strain>
    </source>
</reference>
<feature type="chain" id="PRO_1000149648" description="tRNA (guanine-N(7)-)-methyltransferase">
    <location>
        <begin position="1"/>
        <end position="239"/>
    </location>
</feature>
<feature type="active site" evidence="1">
    <location>
        <position position="144"/>
    </location>
</feature>
<feature type="binding site" evidence="2">
    <location>
        <position position="69"/>
    </location>
    <ligand>
        <name>S-adenosyl-L-methionine</name>
        <dbReference type="ChEBI" id="CHEBI:59789"/>
    </ligand>
</feature>
<feature type="binding site" evidence="2">
    <location>
        <position position="94"/>
    </location>
    <ligand>
        <name>S-adenosyl-L-methionine</name>
        <dbReference type="ChEBI" id="CHEBI:59789"/>
    </ligand>
</feature>
<feature type="binding site" evidence="2">
    <location>
        <position position="121"/>
    </location>
    <ligand>
        <name>S-adenosyl-L-methionine</name>
        <dbReference type="ChEBI" id="CHEBI:59789"/>
    </ligand>
</feature>
<feature type="binding site" evidence="2">
    <location>
        <position position="144"/>
    </location>
    <ligand>
        <name>S-adenosyl-L-methionine</name>
        <dbReference type="ChEBI" id="CHEBI:59789"/>
    </ligand>
</feature>
<feature type="binding site" evidence="2">
    <location>
        <position position="148"/>
    </location>
    <ligand>
        <name>substrate</name>
    </ligand>
</feature>
<feature type="binding site" evidence="2">
    <location>
        <position position="180"/>
    </location>
    <ligand>
        <name>substrate</name>
    </ligand>
</feature>
<feature type="binding site" evidence="2">
    <location>
        <begin position="217"/>
        <end position="220"/>
    </location>
    <ligand>
        <name>substrate</name>
    </ligand>
</feature>
<evidence type="ECO:0000250" key="1"/>
<evidence type="ECO:0000255" key="2">
    <source>
        <dbReference type="HAMAP-Rule" id="MF_01057"/>
    </source>
</evidence>
<protein>
    <recommendedName>
        <fullName evidence="2">tRNA (guanine-N(7)-)-methyltransferase</fullName>
        <ecNumber evidence="2">2.1.1.33</ecNumber>
    </recommendedName>
    <alternativeName>
        <fullName evidence="2">tRNA (guanine(46)-N(7))-methyltransferase</fullName>
    </alternativeName>
    <alternativeName>
        <fullName evidence="2">tRNA(m7G46)-methyltransferase</fullName>
    </alternativeName>
</protein>
<comment type="function">
    <text evidence="2">Catalyzes the formation of N(7)-methylguanine at position 46 (m7G46) in tRNA.</text>
</comment>
<comment type="catalytic activity">
    <reaction evidence="2">
        <text>guanosine(46) in tRNA + S-adenosyl-L-methionine = N(7)-methylguanosine(46) in tRNA + S-adenosyl-L-homocysteine</text>
        <dbReference type="Rhea" id="RHEA:42708"/>
        <dbReference type="Rhea" id="RHEA-COMP:10188"/>
        <dbReference type="Rhea" id="RHEA-COMP:10189"/>
        <dbReference type="ChEBI" id="CHEBI:57856"/>
        <dbReference type="ChEBI" id="CHEBI:59789"/>
        <dbReference type="ChEBI" id="CHEBI:74269"/>
        <dbReference type="ChEBI" id="CHEBI:74480"/>
        <dbReference type="EC" id="2.1.1.33"/>
    </reaction>
</comment>
<comment type="pathway">
    <text evidence="2">tRNA modification; N(7)-methylguanine-tRNA biosynthesis.</text>
</comment>
<comment type="subunit">
    <text evidence="2">Monomer.</text>
</comment>
<comment type="similarity">
    <text evidence="2">Belongs to the class I-like SAM-binding methyltransferase superfamily. TrmB family.</text>
</comment>
<sequence>MKNNIITPRYNLEGVFLRQIHSFVCRKGRTTTSQLSAIKKYWSLIGVDFQLNALNFSSIFKHRAPIILEIGFGSGESLVKTAMNFPEKNFLGIEVYKSGIGSCLHYASSYQIQNLRIIYYDATEVMYNMIPDDTLSKVQIFFPDPWHKKRHHKRRLLKNIFLKIITKKLIIDGILHIATDSESYAFYILDEIKDIKNYKNLSEKNNFVKRPVSRIITKFEKKGLLQGKKIFDLMFQLKK</sequence>
<dbReference type="EC" id="2.1.1.33" evidence="2"/>
<dbReference type="EMBL" id="CP001161">
    <property type="protein sequence ID" value="ACL30894.1"/>
    <property type="molecule type" value="Genomic_DNA"/>
</dbReference>
<dbReference type="RefSeq" id="WP_009874501.1">
    <property type="nucleotide sequence ID" value="NC_011833.1"/>
</dbReference>
<dbReference type="SMR" id="B8D9X3"/>
<dbReference type="KEGG" id="bap:BUAP5A_544"/>
<dbReference type="HOGENOM" id="CLU_050910_0_1_6"/>
<dbReference type="OrthoDB" id="9802090at2"/>
<dbReference type="UniPathway" id="UPA00989"/>
<dbReference type="Proteomes" id="UP000006904">
    <property type="component" value="Chromosome"/>
</dbReference>
<dbReference type="GO" id="GO:0043527">
    <property type="term" value="C:tRNA methyltransferase complex"/>
    <property type="evidence" value="ECO:0007669"/>
    <property type="project" value="TreeGrafter"/>
</dbReference>
<dbReference type="GO" id="GO:0008176">
    <property type="term" value="F:tRNA (guanine(46)-N7)-methyltransferase activity"/>
    <property type="evidence" value="ECO:0007669"/>
    <property type="project" value="UniProtKB-UniRule"/>
</dbReference>
<dbReference type="Gene3D" id="3.40.50.150">
    <property type="entry name" value="Vaccinia Virus protein VP39"/>
    <property type="match status" value="1"/>
</dbReference>
<dbReference type="HAMAP" id="MF_01057">
    <property type="entry name" value="tRNA_methyltr_TrmB"/>
    <property type="match status" value="1"/>
</dbReference>
<dbReference type="InterPro" id="IPR029063">
    <property type="entry name" value="SAM-dependent_MTases_sf"/>
</dbReference>
<dbReference type="InterPro" id="IPR003358">
    <property type="entry name" value="tRNA_(Gua-N-7)_MeTrfase_Trmb"/>
</dbReference>
<dbReference type="InterPro" id="IPR055361">
    <property type="entry name" value="tRNA_methyltr_TrmB_bact"/>
</dbReference>
<dbReference type="NCBIfam" id="TIGR00091">
    <property type="entry name" value="tRNA (guanosine(46)-N7)-methyltransferase TrmB"/>
    <property type="match status" value="1"/>
</dbReference>
<dbReference type="PANTHER" id="PTHR23417">
    <property type="entry name" value="3-DEOXY-D-MANNO-OCTULOSONIC-ACID TRANSFERASE/TRNA GUANINE-N 7 - -METHYLTRANSFERASE"/>
    <property type="match status" value="1"/>
</dbReference>
<dbReference type="PANTHER" id="PTHR23417:SF14">
    <property type="entry name" value="PENTACOTRIPEPTIDE-REPEAT REGION OF PRORP DOMAIN-CONTAINING PROTEIN"/>
    <property type="match status" value="1"/>
</dbReference>
<dbReference type="Pfam" id="PF02390">
    <property type="entry name" value="Methyltransf_4"/>
    <property type="match status" value="1"/>
</dbReference>
<dbReference type="SUPFAM" id="SSF53335">
    <property type="entry name" value="S-adenosyl-L-methionine-dependent methyltransferases"/>
    <property type="match status" value="1"/>
</dbReference>
<dbReference type="PROSITE" id="PS51625">
    <property type="entry name" value="SAM_MT_TRMB"/>
    <property type="match status" value="1"/>
</dbReference>
<organism>
    <name type="scientific">Buchnera aphidicola subsp. Acyrthosiphon pisum (strain 5A)</name>
    <dbReference type="NCBI Taxonomy" id="563178"/>
    <lineage>
        <taxon>Bacteria</taxon>
        <taxon>Pseudomonadati</taxon>
        <taxon>Pseudomonadota</taxon>
        <taxon>Gammaproteobacteria</taxon>
        <taxon>Enterobacterales</taxon>
        <taxon>Erwiniaceae</taxon>
        <taxon>Buchnera</taxon>
    </lineage>
</organism>
<name>TRMB_BUCA5</name>
<gene>
    <name evidence="2" type="primary">trmB</name>
    <name type="ordered locus">BUAP5A_544</name>
</gene>
<accession>B8D9X3</accession>
<keyword id="KW-0489">Methyltransferase</keyword>
<keyword id="KW-0949">S-adenosyl-L-methionine</keyword>
<keyword id="KW-0808">Transferase</keyword>
<keyword id="KW-0819">tRNA processing</keyword>